<accession>Q6Q415</accession>
<feature type="chain" id="PRO_0000318981" description="Large ribosomal subunit protein eL36">
    <location>
        <begin position="1"/>
        <end position="105"/>
    </location>
</feature>
<evidence type="ECO:0000250" key="1">
    <source>
        <dbReference type="UniProtKB" id="Q2YGT9"/>
    </source>
</evidence>
<evidence type="ECO:0000250" key="2">
    <source>
        <dbReference type="UniProtKB" id="Q9Y3U8"/>
    </source>
</evidence>
<evidence type="ECO:0000305" key="3"/>
<name>RL36_DANRE</name>
<gene>
    <name type="primary">rpl36</name>
</gene>
<organism>
    <name type="scientific">Danio rerio</name>
    <name type="common">Zebrafish</name>
    <name type="synonym">Brachydanio rerio</name>
    <dbReference type="NCBI Taxonomy" id="7955"/>
    <lineage>
        <taxon>Eukaryota</taxon>
        <taxon>Metazoa</taxon>
        <taxon>Chordata</taxon>
        <taxon>Craniata</taxon>
        <taxon>Vertebrata</taxon>
        <taxon>Euteleostomi</taxon>
        <taxon>Actinopterygii</taxon>
        <taxon>Neopterygii</taxon>
        <taxon>Teleostei</taxon>
        <taxon>Ostariophysi</taxon>
        <taxon>Cypriniformes</taxon>
        <taxon>Danionidae</taxon>
        <taxon>Danioninae</taxon>
        <taxon>Danio</taxon>
    </lineage>
</organism>
<sequence length="105" mass="12180">MVVRYPMAVGLNKGHKVTKNVSKPKHSRRRGRLTKHAKFARDLIREVCGFAPYERRAMELLKVSKDKRALKFIKKRVGTHIRAKRKREELSNTLAAMRKAAAKKE</sequence>
<dbReference type="EMBL" id="AY561518">
    <property type="protein sequence ID" value="AAS66971.1"/>
    <property type="molecule type" value="mRNA"/>
</dbReference>
<dbReference type="EMBL" id="BC071384">
    <property type="protein sequence ID" value="AAH71384.1"/>
    <property type="molecule type" value="mRNA"/>
</dbReference>
<dbReference type="RefSeq" id="NP_998117.1">
    <property type="nucleotide sequence ID" value="NM_212952.2"/>
</dbReference>
<dbReference type="RefSeq" id="XP_005170408.1">
    <property type="nucleotide sequence ID" value="XM_005170351.5"/>
</dbReference>
<dbReference type="PDB" id="7OYA">
    <property type="method" value="EM"/>
    <property type="resolution" value="3.20 A"/>
    <property type="chains" value="i1=1-105"/>
</dbReference>
<dbReference type="PDB" id="7OYB">
    <property type="method" value="EM"/>
    <property type="resolution" value="2.40 A"/>
    <property type="chains" value="i1=1-105"/>
</dbReference>
<dbReference type="PDBsum" id="7OYA"/>
<dbReference type="PDBsum" id="7OYB"/>
<dbReference type="EMDB" id="EMD-13111"/>
<dbReference type="EMDB" id="EMD-13112"/>
<dbReference type="SMR" id="Q6Q415"/>
<dbReference type="BioGRID" id="90858">
    <property type="interactions" value="1"/>
</dbReference>
<dbReference type="FunCoup" id="Q6Q415">
    <property type="interactions" value="1542"/>
</dbReference>
<dbReference type="STRING" id="7955.ENSDARP00000141617"/>
<dbReference type="PaxDb" id="7955-ENSDARP00000124304"/>
<dbReference type="Ensembl" id="ENSDART00000161212">
    <property type="protein sequence ID" value="ENSDARP00000141617"/>
    <property type="gene ID" value="ENSDARG00000100588"/>
</dbReference>
<dbReference type="Ensembl" id="ENSDART00000163327">
    <property type="protein sequence ID" value="ENSDARP00000138386"/>
    <property type="gene ID" value="ENSDARG00000100588"/>
</dbReference>
<dbReference type="GeneID" id="405888"/>
<dbReference type="KEGG" id="dre:405888"/>
<dbReference type="AGR" id="ZFIN:ZDB-GENE-040622-2"/>
<dbReference type="CTD" id="25873"/>
<dbReference type="ZFIN" id="ZDB-GENE-040622-2">
    <property type="gene designation" value="rpl36"/>
</dbReference>
<dbReference type="eggNOG" id="KOG3452">
    <property type="taxonomic scope" value="Eukaryota"/>
</dbReference>
<dbReference type="HOGENOM" id="CLU_140672_0_0_1"/>
<dbReference type="InParanoid" id="Q6Q415"/>
<dbReference type="OMA" id="NKGHKTE"/>
<dbReference type="OrthoDB" id="9616667at2759"/>
<dbReference type="PhylomeDB" id="Q6Q415"/>
<dbReference type="TreeFam" id="TF314463"/>
<dbReference type="Reactome" id="R-DRE-156827">
    <property type="pathway name" value="L13a-mediated translational silencing of Ceruloplasmin expression"/>
</dbReference>
<dbReference type="Reactome" id="R-DRE-1799339">
    <property type="pathway name" value="SRP-dependent cotranslational protein targeting to membrane"/>
</dbReference>
<dbReference type="Reactome" id="R-DRE-72689">
    <property type="pathway name" value="Formation of a pool of free 40S subunits"/>
</dbReference>
<dbReference type="Reactome" id="R-DRE-975956">
    <property type="pathway name" value="Nonsense Mediated Decay (NMD) independent of the Exon Junction Complex (EJC)"/>
</dbReference>
<dbReference type="Reactome" id="R-DRE-975957">
    <property type="pathway name" value="Nonsense Mediated Decay (NMD) enhanced by the Exon Junction Complex (EJC)"/>
</dbReference>
<dbReference type="PRO" id="PR:Q6Q415"/>
<dbReference type="Proteomes" id="UP000000437">
    <property type="component" value="Chromosome 22"/>
</dbReference>
<dbReference type="Bgee" id="ENSDARG00000100588">
    <property type="expression patterns" value="Expressed in tail bud paraxial mesoderm and 32 other cell types or tissues"/>
</dbReference>
<dbReference type="GO" id="GO:0022625">
    <property type="term" value="C:cytosolic large ribosomal subunit"/>
    <property type="evidence" value="ECO:0000318"/>
    <property type="project" value="GO_Central"/>
</dbReference>
<dbReference type="GO" id="GO:0003735">
    <property type="term" value="F:structural constituent of ribosome"/>
    <property type="evidence" value="ECO:0000318"/>
    <property type="project" value="GO_Central"/>
</dbReference>
<dbReference type="GO" id="GO:0007420">
    <property type="term" value="P:brain development"/>
    <property type="evidence" value="ECO:0000315"/>
    <property type="project" value="ZFIN"/>
</dbReference>
<dbReference type="GO" id="GO:0002181">
    <property type="term" value="P:cytoplasmic translation"/>
    <property type="evidence" value="ECO:0000318"/>
    <property type="project" value="GO_Central"/>
</dbReference>
<dbReference type="GO" id="GO:0051726">
    <property type="term" value="P:regulation of cell cycle"/>
    <property type="evidence" value="ECO:0000315"/>
    <property type="project" value="ZFIN"/>
</dbReference>
<dbReference type="FunFam" id="1.10.10.1760:FF:000002">
    <property type="entry name" value="60S ribosomal protein L36"/>
    <property type="match status" value="1"/>
</dbReference>
<dbReference type="Gene3D" id="1.10.10.1760">
    <property type="entry name" value="60S ribosomal protein L36"/>
    <property type="match status" value="1"/>
</dbReference>
<dbReference type="InterPro" id="IPR000509">
    <property type="entry name" value="Ribosomal_eL36"/>
</dbReference>
<dbReference type="InterPro" id="IPR038097">
    <property type="entry name" value="Ribosomal_eL36_sf"/>
</dbReference>
<dbReference type="PANTHER" id="PTHR10114">
    <property type="entry name" value="60S RIBOSOMAL PROTEIN L36"/>
    <property type="match status" value="1"/>
</dbReference>
<dbReference type="Pfam" id="PF01158">
    <property type="entry name" value="Ribosomal_L36e"/>
    <property type="match status" value="1"/>
</dbReference>
<dbReference type="PROSITE" id="PS01190">
    <property type="entry name" value="RIBOSOMAL_L36E"/>
    <property type="match status" value="1"/>
</dbReference>
<protein>
    <recommendedName>
        <fullName evidence="3">Large ribosomal subunit protein eL36</fullName>
    </recommendedName>
    <alternativeName>
        <fullName>60S ribosomal protein L36</fullName>
    </alternativeName>
</protein>
<proteinExistence type="evidence at protein level"/>
<comment type="function">
    <text evidence="2">Component of the large ribosomal subunit. The ribosome is a large ribonucleoprotein complex responsible for the synthesis of proteins in the cell.</text>
</comment>
<comment type="subunit">
    <text evidence="2">Component of the large ribosomal subunit.</text>
</comment>
<comment type="subcellular location">
    <subcellularLocation>
        <location evidence="2">Cytoplasm</location>
        <location evidence="2">Cytosol</location>
    </subcellularLocation>
    <subcellularLocation>
        <location evidence="2">Cytoplasm</location>
    </subcellularLocation>
    <text evidence="1 2">Detected on cytosolic polysomes.</text>
</comment>
<comment type="similarity">
    <text evidence="3">Belongs to the eukaryotic ribosomal protein eL36 family.</text>
</comment>
<reference key="1">
    <citation type="journal article" date="2004" name="PLoS Biol.">
        <title>Many ribosomal protein genes are cancer genes in zebrafish.</title>
        <authorList>
            <person name="Amsterdam A."/>
            <person name="Sadler K.C."/>
            <person name="Lai K."/>
            <person name="Farrington S."/>
            <person name="Bronson R.T."/>
            <person name="Lees J.A."/>
            <person name="Hopkins N."/>
        </authorList>
    </citation>
    <scope>NUCLEOTIDE SEQUENCE [MRNA]</scope>
</reference>
<reference key="2">
    <citation type="submission" date="2004-06" db="EMBL/GenBank/DDBJ databases">
        <authorList>
            <consortium name="NIH - Zebrafish Gene Collection (ZGC) project"/>
        </authorList>
    </citation>
    <scope>NUCLEOTIDE SEQUENCE [LARGE SCALE MRNA]</scope>
    <source>
        <tissue>Embryo</tissue>
    </source>
</reference>
<keyword id="KW-0002">3D-structure</keyword>
<keyword id="KW-0963">Cytoplasm</keyword>
<keyword id="KW-1185">Reference proteome</keyword>
<keyword id="KW-0687">Ribonucleoprotein</keyword>
<keyword id="KW-0689">Ribosomal protein</keyword>